<proteinExistence type="evidence at protein level"/>
<protein>
    <recommendedName>
        <fullName>Transcriptional regulator ICP22</fullName>
    </recommendedName>
    <alternativeName>
        <fullName>Immediate-early protein IE68</fullName>
    </alternativeName>
    <alternativeName>
        <fullName>Infected cell protein 22</fullName>
        <shortName>ICP22</shortName>
    </alternativeName>
</protein>
<organismHost>
    <name type="scientific">Homo sapiens</name>
    <name type="common">Human</name>
    <dbReference type="NCBI Taxonomy" id="9606"/>
</organismHost>
<evidence type="ECO:0000256" key="1">
    <source>
        <dbReference type="SAM" id="MobiDB-lite"/>
    </source>
</evidence>
<evidence type="ECO:0000269" key="2">
    <source>
    </source>
</evidence>
<evidence type="ECO:0000269" key="3">
    <source>
    </source>
</evidence>
<evidence type="ECO:0000269" key="4">
    <source>
    </source>
</evidence>
<evidence type="ECO:0000269" key="5">
    <source>
    </source>
</evidence>
<evidence type="ECO:0000269" key="6">
    <source>
    </source>
</evidence>
<evidence type="ECO:0000269" key="7">
    <source>
    </source>
</evidence>
<evidence type="ECO:0000269" key="8">
    <source>
    </source>
</evidence>
<evidence type="ECO:0000269" key="9">
    <source>
    </source>
</evidence>
<evidence type="ECO:0000269" key="10">
    <source>
    </source>
</evidence>
<evidence type="ECO:0000269" key="11">
    <source>
    </source>
</evidence>
<evidence type="ECO:0000269" key="12">
    <source>
    </source>
</evidence>
<evidence type="ECO:0000269" key="13">
    <source>
    </source>
</evidence>
<evidence type="ECO:0000269" key="14">
    <source>
    </source>
</evidence>
<evidence type="ECO:0000305" key="15"/>
<evidence type="ECO:0000305" key="16">
    <source>
    </source>
</evidence>
<evidence type="ECO:0000305" key="17">
    <source>
    </source>
</evidence>
<evidence type="ECO:0000305" key="18">
    <source>
    </source>
</evidence>
<evidence type="ECO:0000305" key="19">
    <source>
    </source>
</evidence>
<evidence type="ECO:0000305" key="20">
    <source>
    </source>
</evidence>
<evidence type="ECO:0000305" key="21">
    <source>
    </source>
</evidence>
<name>ICP22_HHV11</name>
<comment type="function">
    <text evidence="5 6 7 8 9 10 11 12 13 17 19 20">Transcriptional regulator that interacts with cellular elongation regulators to inhibit host cell transcription and promote viral gene expression in productive infection, mainly by mediating changes on the host RNA polymerase II (PubMed:17344289, PubMed:28611249, PubMed:34696162). One change, which is UL13 independent, is the rapid loss of Pol II forms bearing Ser-2 phosphorylation in the heptapeptides of the CTD leading to unproductive elongation of pol II (PubMed:17344289, PubMed:25233083). A second change, which is UL13 dependent, is the appearance of an intermediate form of Pol II that differs from the normal hypo- and hyperphosphorylated forms. These Pol II modifications immediately inhibit host genome transcription, leading to cell cycle deregulation and loss of efficient antiviral response (Probable). In opposition to its role in productive infection, inhibits transcription elongation of early viral genes, which can be beneficial because it reduces antisense and intergenic transcription (PubMed:23029222, PubMed:35019725). This regulatory function directly or indirectly helps to retain Pol activity on the viral genome later in infection (PubMed:35019725). The viral protein VP16 overcomes transcriptional inhibition by ICP22 to promote transcription of IE genes (PubMed:23029222, PubMed:34696162). Recruits FACT complexes to the viral genome by interacting with the FACT complex, which could allow Pol II to cross the nucleosome barrier on the viral genome and achieve efficient viral transcription elongation late in viral infection and ultimately infectious virion production (Probable). Plays a role in virion primary envelopment, possibly by interacting with and regulating UL31 and UL34 (PubMed:24741100). Essential for the recruitment of Hsc70 into virus induced chaperone enriched (VICE) domains in infected cells (PubMed:20032172). May function as a co-chaperone (J protein-like), functionning together with Hsc70 to recognize and manage aggregated and misfolded proteins (PubMed:31748398).</text>
</comment>
<comment type="subunit">
    <text evidence="9 10 11 12 18 21">Interacts with many transcription elongation factors (PubMed:34696162). Interacts with host FACT complex members SSRP1 and SUPT16H; these interactions are required for the relocalization of the FACT complex in infected cells and its association with viral genomes (Probable) (PubMed:28611249). Interacts with CDK9 subunit of the host positive transcription elongation factor P-TEFb; this interaction blocks Pol II phosphorylation leading to the inhibition of the expression of host cell genes and the regulation of viral genes expression (Probable) (PubMed:25233083). Interacts with transcriptional kinases such as CDK11, CDK12, and CDK13 (PubMed:34696162). Interacts with host cyclin CCNT1 (PubMed:34696162). Interacts with host cyclin CCNK (PubMed:34696162). Interacts with host cyclin CCNL1 (PubMed:34696162). Interacts with the PAF1 complex (PubMed:34696162). Interacts with host Pol-II (PubMed:25233083). Interacts with host HSPA8/HSP40; this interaction recruits HSPA8/HSP40 to discrete nuclear foci (PubMed:31748398).</text>
</comment>
<comment type="subcellular location">
    <subcellularLocation>
        <location evidence="4 8 10">Host nucleus</location>
    </subcellularLocation>
    <text evidence="4 8">Localizes in small nuclear bodies early in infection then moves to a more diffuse distribution in viral compartments as infection progresses (PubMed:16877770). UL31 mediates the recruitment and anchorage of ICP22 at the nuclear membrane (PubMed:24741100).</text>
</comment>
<comment type="alternative products">
    <event type="alternative promoter"/>
    <isoform>
        <id>P04485-1</id>
        <name>ICP22</name>
        <sequence type="displayed"/>
    </isoform>
    <isoform>
        <id>P04485-2</id>
        <name>US1.5</name>
        <sequence type="described" ref="VSP_025673"/>
    </isoform>
    <text>Additional isoforms seem to exist.</text>
</comment>
<comment type="PTM">
    <text evidence="2 3 14">Phosphorylated by serine/threonine-protein kinase UL13 (PubMed:1323829, PubMed:8393574). Tyrosine phosphorylated.</text>
</comment>
<comment type="miscellaneous">
    <text>ICP22 and protein US1.5 mRNAs are transcribed from two different promoters on the US1 gene.</text>
</comment>
<comment type="similarity">
    <text evidence="15">Belongs to the herpesviridae ICP22 family.</text>
</comment>
<accession>P04485</accession>
<feature type="chain" id="PRO_0000115837" description="Transcriptional regulator ICP22">
    <location>
        <begin position="1"/>
        <end position="420"/>
    </location>
</feature>
<feature type="region of interest" description="Disordered" evidence="1">
    <location>
        <begin position="1"/>
        <end position="172"/>
    </location>
</feature>
<feature type="region of interest" description="Interaction with CDK9 and inhibition of pol II CTD Ser2 phosphorylation" evidence="9">
    <location>
        <begin position="193"/>
        <end position="296"/>
    </location>
</feature>
<feature type="region of interest" description="Disordered" evidence="1">
    <location>
        <begin position="315"/>
        <end position="341"/>
    </location>
</feature>
<feature type="region of interest" description="Disordered" evidence="1">
    <location>
        <begin position="373"/>
        <end position="393"/>
    </location>
</feature>
<feature type="compositionally biased region" description="Acidic residues" evidence="1">
    <location>
        <begin position="41"/>
        <end position="68"/>
    </location>
</feature>
<feature type="compositionally biased region" description="Basic residues" evidence="1">
    <location>
        <begin position="74"/>
        <end position="83"/>
    </location>
</feature>
<feature type="compositionally biased region" description="Acidic residues" evidence="1">
    <location>
        <begin position="104"/>
        <end position="116"/>
    </location>
</feature>
<feature type="site" description="Interaction with host FACT complex" evidence="12">
    <location>
        <position position="191"/>
    </location>
</feature>
<feature type="site" description="Interaction with host FACT complex" evidence="12">
    <location>
        <position position="225"/>
    </location>
</feature>
<feature type="site" description="Interaction with host FACT complex" evidence="12">
    <location>
        <position position="230"/>
    </location>
</feature>
<feature type="modified residue" description="Phosphotyrosine; by host" evidence="16">
    <location>
        <position position="193"/>
    </location>
</feature>
<feature type="splice variant" id="VSP_025673" description="In isoform US1.5." evidence="15">
    <location>
        <begin position="1"/>
        <end position="146"/>
    </location>
</feature>
<feature type="mutagenesis site" description="Alteration of post-translational modifications." evidence="2">
    <original>Y</original>
    <variation>A</variation>
    <location>
        <position position="193"/>
    </location>
</feature>
<keyword id="KW-0877">Alternative promoter usage</keyword>
<keyword id="KW-0244">Early protein</keyword>
<keyword id="KW-1262">Eukaryotic host gene expression shutoff by virus</keyword>
<keyword id="KW-1191">Eukaryotic host transcription shutoff by virus</keyword>
<keyword id="KW-1190">Host gene expression shutoff by virus</keyword>
<keyword id="KW-1048">Host nucleus</keyword>
<keyword id="KW-0945">Host-virus interaction</keyword>
<keyword id="KW-1104">Inhibition of host RNA polymerase II by virus</keyword>
<keyword id="KW-0597">Phosphoprotein</keyword>
<keyword id="KW-1185">Reference proteome</keyword>
<keyword id="KW-0804">Transcription</keyword>
<keyword id="KW-0805">Transcription regulation</keyword>
<organism>
    <name type="scientific">Human herpesvirus 1 (strain 17)</name>
    <name type="common">HHV-1</name>
    <name type="synonym">Human herpes simplex virus 1</name>
    <dbReference type="NCBI Taxonomy" id="10299"/>
    <lineage>
        <taxon>Viruses</taxon>
        <taxon>Duplodnaviria</taxon>
        <taxon>Heunggongvirae</taxon>
        <taxon>Peploviricota</taxon>
        <taxon>Herviviricetes</taxon>
        <taxon>Herpesvirales</taxon>
        <taxon>Orthoherpesviridae</taxon>
        <taxon>Alphaherpesvirinae</taxon>
        <taxon>Simplexvirus</taxon>
        <taxon>Simplexvirus humanalpha1</taxon>
        <taxon>Human herpesvirus 1</taxon>
    </lineage>
</organism>
<gene>
    <name type="primary">ICP22</name>
    <name type="ORF">US1</name>
</gene>
<reference key="1">
    <citation type="journal article" date="1988" name="J. Gen. Virol.">
        <title>The complete DNA sequence of the long unique region in the genome of herpes simplex virus type 1.</title>
        <authorList>
            <person name="McGeoch D.J."/>
            <person name="Dalrymple M.A."/>
            <person name="Davison A.J."/>
            <person name="Dolan A."/>
            <person name="Frame M.C."/>
            <person name="McNab D."/>
            <person name="Perry L.J."/>
            <person name="Scott J.E."/>
            <person name="Taylor P."/>
        </authorList>
    </citation>
    <scope>NUCLEOTIDE SEQUENCE [GENOMIC DNA]</scope>
</reference>
<reference key="2">
    <citation type="journal article" date="1985" name="J. Mol. Biol.">
        <title>Sequence determination and genetic content of the short unique region in the genome of herpes simplex virus type 1.</title>
        <authorList>
            <person name="McGeoch D.J."/>
            <person name="Dolan A."/>
            <person name="Donald S."/>
            <person name="Rixon F.J."/>
        </authorList>
    </citation>
    <scope>NUCLEOTIDE SEQUENCE [LARGE SCALE GENOMIC DNA]</scope>
</reference>
<reference key="3">
    <citation type="journal article" date="1992" name="Proc. Natl. Acad. Sci. U.S.A.">
        <title>The UL13 gene of herpes simplex virus 1 encodes the functions for posttranslational processing associated with phosphorylation of the regulatory protein alpha 22.</title>
        <authorList>
            <person name="Purves F.C."/>
            <person name="Roizman B."/>
        </authorList>
    </citation>
    <scope>PHOSPHORYLATION BY SERINE/THREONINE-PROTEIN KINASE UL13</scope>
</reference>
<reference key="4">
    <citation type="journal article" date="1993" name="Proc. Natl. Acad. Sci. U.S.A.">
        <title>Processing of the herpes simplex virus regulatory protein alpha 22 mediated by the UL13 protein kinase determines the accumulation of a subset of alpha and gamma mRNAs and proteins in infected cells.</title>
        <authorList>
            <person name="Purves F.C."/>
            <person name="Ogle W.O."/>
            <person name="Roizman B."/>
        </authorList>
    </citation>
    <scope>PHOSPHORYLATION BY SERINE/THREONINE-PROTEIN KINASE UL13</scope>
</reference>
<reference key="5">
    <citation type="journal article" date="2003" name="Virology">
        <title>Mutation of the protein tyrosine kinase consensus site in the herpes simplex virus 1 alpha22 gene alters ICP22 posttranslational modification.</title>
        <authorList>
            <person name="O'Toole J.M."/>
            <person name="Aubert M."/>
            <person name="Kotsakis A."/>
            <person name="Blaho J.A."/>
        </authorList>
    </citation>
    <scope>PHOSPHORYLATION AT TYR-193</scope>
    <scope>MUTAGENESIS OF TYR-193</scope>
</reference>
<reference key="6">
    <citation type="journal article" date="2005" name="J. Virol.">
        <title>Herpes simplex virus 1 ICP22 regulates the accumulation of a shorter mRNA and of a truncated US3 protein kinase that exhibits altered functions.</title>
        <authorList>
            <person name="Poon A.P."/>
            <person name="Roizman B."/>
        </authorList>
    </citation>
    <scope>ISOFORM US1.5</scope>
</reference>
<reference key="7">
    <citation type="journal article" date="2006" name="J. Virol.">
        <title>The products of the herpes simplex virus type 1 immediate-early US1/US1.5 genes downregulate levels of S-phase-specific cyclins and facilitate virus replication in S-phase Vero cells.</title>
        <authorList>
            <person name="Orlando J.S."/>
            <person name="Astor T.L."/>
            <person name="Rundle S.A."/>
            <person name="Schaffer P.A."/>
        </authorList>
    </citation>
    <scope>FUNCTION</scope>
</reference>
<reference key="8">
    <citation type="journal article" date="2006" name="J. Biochem.">
        <title>Structural and functional characterization of herpes simplex virus 1 immediate-early protein infected-cell protein 22.</title>
        <authorList>
            <person name="Cun W."/>
            <person name="Hong M."/>
            <person name="Liu L.D."/>
            <person name="Dong C.H."/>
            <person name="Luo J."/>
            <person name="Li Q.H."/>
        </authorList>
    </citation>
    <scope>SUBCELLULAR LOCATION</scope>
</reference>
<reference key="9">
    <citation type="journal article" date="2007" name="J. Virol.">
        <title>Herpes simplex virus immediate-early protein ICP22 triggers loss of serine 2-phosphorylated RNA polymerase II.</title>
        <authorList>
            <person name="Fraser K.A."/>
            <person name="Rice S.A."/>
        </authorList>
    </citation>
    <scope>FUNCTION</scope>
</reference>
<reference key="10">
    <citation type="journal article" date="2010" name="J. Virol.">
        <title>Herpes simplex virus type 1 immediate-early protein ICP22 is required for VICE domain formation during productive viral infection.</title>
        <authorList>
            <person name="Bastian T.W."/>
            <person name="Livingston C.M."/>
            <person name="Weller S.K."/>
            <person name="Rice S.A."/>
        </authorList>
    </citation>
    <scope>FUNCTION</scope>
</reference>
<reference key="11">
    <citation type="journal article" date="2012" name="PLoS ONE">
        <title>Herpes simplex virus 1 ICP22 inhibits the transcription of viral gene promoters by binding to and blocking the recruitment of P-TEFb.</title>
        <authorList>
            <person name="Guo L."/>
            <person name="Wu W.J."/>
            <person name="Liu L.D."/>
            <person name="Wang L.C."/>
            <person name="Zhang Y."/>
            <person name="Wu L.Q."/>
            <person name="Guan Y."/>
            <person name="Li Q.H."/>
        </authorList>
    </citation>
    <scope>FUNCTION</scope>
    <scope>INTERACTION WITH HOST P-TEFB TRANSCRIPTION ELONGATION COMPLEX</scope>
</reference>
<reference key="12">
    <citation type="journal article" date="2014" name="PLoS ONE">
        <title>Herpes Simplex Virus 1 (HSV-1) ICP22 protein directly interacts with cyclin-dependent kinase (CDK)9 to inhibit RNA polymerase II transcription elongation.</title>
        <authorList>
            <person name="Zaborowska J."/>
            <person name="Baumli S."/>
            <person name="Laitem C."/>
            <person name="O'Reilly D."/>
            <person name="Thomas P.H."/>
            <person name="O'Hare P."/>
            <person name="Murphy S."/>
        </authorList>
    </citation>
    <scope>INTERACTION WITH HOST CDK9</scope>
    <scope>FUNCTION</scope>
    <scope>INTERACTION WITH HOST POL-II</scope>
</reference>
<reference key="13">
    <citation type="journal article" date="2014" name="J. Virol.">
        <title>Role of herpes simplex virus 1 immediate early protein ICP22 in viral nuclear egress.</title>
        <authorList>
            <person name="Maruzuru Y."/>
            <person name="Shindo K."/>
            <person name="Liu Z."/>
            <person name="Oyama M."/>
            <person name="Kozuka-Hata H."/>
            <person name="Arii J."/>
            <person name="Kato A."/>
            <person name="Kawaguchi Y."/>
        </authorList>
    </citation>
    <scope>SUBCELLULAR LOCATION</scope>
</reference>
<reference key="14">
    <citation type="journal article" date="2015" name="J. Virol.">
        <title>Infection by Herpes Simplex Virus 1 Causes Near-Complete Loss of RNA Polymerase II Occupancy on the Host Cell Genome.</title>
        <authorList>
            <person name="Abrisch R.G."/>
            <person name="Eidem T.M."/>
            <person name="Yakovchuk P."/>
            <person name="Kugel J.F."/>
            <person name="Goodrich J.A."/>
        </authorList>
    </citation>
    <scope>FUNCTION</scope>
</reference>
<reference key="15">
    <citation type="journal article" date="2017" name="MBio">
        <title>A Herpesviral Immediate Early Protein Promotes Transcription Elongation of Viral Transcripts.</title>
        <authorList>
            <person name="Fox H.L."/>
            <person name="Dembowski J.A."/>
            <person name="DeLuca N.A."/>
        </authorList>
    </citation>
    <scope>FUNCTION</scope>
    <scope>INTERACTION WITH HOST SSRP1 AND SUPT16H</scope>
    <scope>SUBCELLULAR LOCATION</scope>
</reference>
<reference key="16">
    <citation type="journal article" date="2020" name="J. Virol.">
        <title>The Herpes Simplex Virus 1 Immediate Early Protein ICP22 Is a Functional Mimic of a Cellular J Protein.</title>
        <authorList>
            <person name="Adlakha M."/>
            <person name="Livingston C.M."/>
            <person name="Bezsonova I."/>
            <person name="Weller S.K."/>
        </authorList>
    </citation>
    <scope>FUNCTION</scope>
    <scope>INTERACTION WITH HOST HSPA8/HSP40</scope>
    <source>
        <strain>Kos</strain>
    </source>
</reference>
<reference key="17">
    <citation type="journal article" date="2021" name="Vaccines (Basel)">
        <title>HSV-1 ICP22 Is a Selective Viral Repressor of Cellular RNA Polymerase II-Mediated Transcription Elongation.</title>
        <authorList>
            <person name="Isa N.F."/>
            <person name="Bensaude O."/>
            <person name="Aziz N.C."/>
            <person name="Murphy S."/>
        </authorList>
    </citation>
    <scope>FUNCTION</scope>
    <scope>INTERACTION WITH HOST CDK9</scope>
    <scope>INTERACTION WITH HOST CDK11</scope>
    <scope>INTERACTION WITH HOST CDK12</scope>
    <scope>INTERACTION WITH HOST CDK13</scope>
    <scope>INTERACTION WITH HOST CCNT1</scope>
    <scope>INTERACTION WITH HOST CCNK</scope>
    <scope>INTERACTION WITH HOST CCNL1</scope>
    <scope>INTERACTION WITH THE HOST PAF1 COMPLEX</scope>
    <scope>INTERACTION WITH THE HOST FACT COMPLEX</scope>
</reference>
<reference key="18">
    <citation type="journal article" date="2022" name="J. Virol.">
        <title>ICP22 of Herpes Simplex Virus 1 Decreases RNA Polymerase Processivity.</title>
        <authorList>
            <person name="Birkenheuer C.H."/>
            <person name="Dunn L."/>
            <person name="Dufour R."/>
            <person name="Baines J.D."/>
        </authorList>
    </citation>
    <scope>FUNCTION</scope>
</reference>
<sequence>MADISPGAFAPCVKARRPALRSPPLGTRKRKRPSRPLSSESEVESDTALESEVESETASDSTESGDQDEAPRIGGRRAPRRLGGRFFLDMSAESTTGTETDASVSDDPDDTSDWSYDDIPPRPKRARVNLRLTSSPDRRDGVIFPKMGRVRSTRETQPRAPTPSAPSPNAMLRRSVRQAQRRSSARWTPDLGYMRQCINQLFRVLRVARDPHGSANRLRHLIRDCYLMGYCRARLAPRTWCRLLQVSGGTWGMHLRNTIREVEARFDATAEPVCKLPCLETRRYGPECDLSNLEIHLSATSDDEISDATDLEAAGSDHTLASQSDTEDAPSPVTLETPEPRGSLAVRLEDEFGEFDWTPQEGSQPWLSAVVADTSSVERPGPSDSGAGRAAEDRKCLDGCRKMRFSTACPYPCSDTFLRP</sequence>
<dbReference type="EMBL" id="X14112">
    <property type="protein sequence ID" value="CAA32287.1"/>
    <property type="molecule type" value="Genomic_DNA"/>
</dbReference>
<dbReference type="EMBL" id="X02138">
    <property type="protein sequence ID" value="CAA26055.1"/>
    <property type="molecule type" value="Genomic_DNA"/>
</dbReference>
<dbReference type="EMBL" id="L00036">
    <property type="protein sequence ID" value="AAA96687.1"/>
    <property type="molecule type" value="Genomic_DNA"/>
</dbReference>
<dbReference type="PIR" id="A03723">
    <property type="entry name" value="EDBE17"/>
</dbReference>
<dbReference type="RefSeq" id="YP_009137136.1">
    <property type="nucleotide sequence ID" value="NC_001806.2"/>
</dbReference>
<dbReference type="BioGRID" id="971458">
    <property type="interactions" value="8"/>
</dbReference>
<dbReference type="IntAct" id="P04485">
    <property type="interactions" value="1"/>
</dbReference>
<dbReference type="MINT" id="P04485"/>
<dbReference type="iPTMnet" id="P04485"/>
<dbReference type="GeneID" id="2703435"/>
<dbReference type="KEGG" id="vg:2703435"/>
<dbReference type="Proteomes" id="UP000009294">
    <property type="component" value="Segment"/>
</dbReference>
<dbReference type="GO" id="GO:0042025">
    <property type="term" value="C:host cell nucleus"/>
    <property type="evidence" value="ECO:0000314"/>
    <property type="project" value="UniProtKB"/>
</dbReference>
<dbReference type="GO" id="GO:0010468">
    <property type="term" value="P:regulation of gene expression"/>
    <property type="evidence" value="ECO:0007669"/>
    <property type="project" value="InterPro"/>
</dbReference>
<dbReference type="GO" id="GO:0039657">
    <property type="term" value="P:symbiont-mediated suppression of host gene expression"/>
    <property type="evidence" value="ECO:0007669"/>
    <property type="project" value="UniProtKB-KW"/>
</dbReference>
<dbReference type="GO" id="GO:0039523">
    <property type="term" value="P:symbiont-mediated suppression of host mRNA transcription via inhibition of RNA polymerase II activity"/>
    <property type="evidence" value="ECO:0000314"/>
    <property type="project" value="UniProtKB"/>
</dbReference>
<dbReference type="InterPro" id="IPR003403">
    <property type="entry name" value="IE68"/>
</dbReference>
<dbReference type="Pfam" id="PF02479">
    <property type="entry name" value="Herpes_IE68"/>
    <property type="match status" value="1"/>
</dbReference>